<reference evidence="5" key="1">
    <citation type="submission" date="2002-07" db="UniProtKB">
        <title>Purification and characterisation of Morus nigra agglutinins I and II.</title>
        <authorList>
            <person name="Angel C.E."/>
            <person name="Pickford W.J."/>
            <person name="Grant G."/>
            <person name="Kelly D."/>
        </authorList>
    </citation>
    <scope>PROTEIN SEQUENCE</scope>
    <scope>FUNCTION</scope>
    <source>
        <tissue evidence="5">Bark</tissue>
        <tissue evidence="5">Root</tissue>
    </source>
</reference>
<protein>
    <recommendedName>
        <fullName>Agglutinin beta-2 chain isoform 1</fullName>
    </recommendedName>
    <alternativeName>
        <fullName>Agglutinin II beta chain, isoform 1</fullName>
    </alternativeName>
    <alternativeName>
        <fullName>MNA II beta, isoform 1</fullName>
    </alternativeName>
</protein>
<accession>P83423</accession>
<feature type="chain" id="PRO_0000273270" description="Agglutinin beta-2 chain isoform 1">
    <location>
        <begin position="1"/>
        <end position="20" status="greater than"/>
    </location>
</feature>
<feature type="region of interest" description="Disordered" evidence="3">
    <location>
        <begin position="1"/>
        <end position="20"/>
    </location>
</feature>
<feature type="compositionally biased region" description="Polar residues" evidence="3">
    <location>
        <begin position="1"/>
        <end position="10"/>
    </location>
</feature>
<feature type="non-terminal residue" evidence="5">
    <location>
        <position position="20"/>
    </location>
</feature>
<comment type="function">
    <text evidence="4 5">Alpha-methyl-D-mannoside and D-mannose specific lectin. Binds IgA.</text>
</comment>
<comment type="subunit">
    <text evidence="1">Tetramer of four alpha chains associated with two or four beta chains.</text>
</comment>
<comment type="miscellaneous">
    <text evidence="5">Two isoforms exist, a major form and a minor form. This is the major form.</text>
</comment>
<comment type="similarity">
    <text evidence="2">Belongs to the jacalin lectin family.</text>
</comment>
<keyword id="KW-0903">Direct protein sequencing</keyword>
<keyword id="KW-0388">IgA-binding protein</keyword>
<keyword id="KW-0430">Lectin</keyword>
<keyword id="KW-0465">Mannose-binding</keyword>
<name>LC2B1_MORNI</name>
<evidence type="ECO:0000250" key="1">
    <source>
        <dbReference type="UniProtKB" id="P18673"/>
    </source>
</evidence>
<evidence type="ECO:0000255" key="2"/>
<evidence type="ECO:0000256" key="3">
    <source>
        <dbReference type="SAM" id="MobiDB-lite"/>
    </source>
</evidence>
<evidence type="ECO:0000269" key="4">
    <source ref="1"/>
</evidence>
<evidence type="ECO:0000305" key="5"/>
<proteinExistence type="evidence at protein level"/>
<dbReference type="GO" id="GO:0005537">
    <property type="term" value="F:D-mannose binding"/>
    <property type="evidence" value="ECO:0007669"/>
    <property type="project" value="UniProtKB-KW"/>
</dbReference>
<dbReference type="GO" id="GO:0019862">
    <property type="term" value="F:IgA binding"/>
    <property type="evidence" value="ECO:0007669"/>
    <property type="project" value="UniProtKB-KW"/>
</dbReference>
<organism>
    <name type="scientific">Morus nigra</name>
    <name type="common">Black mulberry</name>
    <dbReference type="NCBI Taxonomy" id="85232"/>
    <lineage>
        <taxon>Eukaryota</taxon>
        <taxon>Viridiplantae</taxon>
        <taxon>Streptophyta</taxon>
        <taxon>Embryophyta</taxon>
        <taxon>Tracheophyta</taxon>
        <taxon>Spermatophyta</taxon>
        <taxon>Magnoliopsida</taxon>
        <taxon>eudicotyledons</taxon>
        <taxon>Gunneridae</taxon>
        <taxon>Pentapetalae</taxon>
        <taxon>rosids</taxon>
        <taxon>fabids</taxon>
        <taxon>Rosales</taxon>
        <taxon>Moraceae</taxon>
        <taxon>Moreae</taxon>
        <taxon>Morus</taxon>
    </lineage>
</organism>
<sequence length="20" mass="1990">TQSTGTSQTIAVGLWGGPDN</sequence>